<evidence type="ECO:0000255" key="1">
    <source>
        <dbReference type="HAMAP-Rule" id="MF_00098"/>
    </source>
</evidence>
<name>SYM_BURL3</name>
<reference key="1">
    <citation type="submission" date="2005-10" db="EMBL/GenBank/DDBJ databases">
        <title>Complete sequence of chromosome 1 of Burkholderia sp. 383.</title>
        <authorList>
            <consortium name="US DOE Joint Genome Institute"/>
            <person name="Copeland A."/>
            <person name="Lucas S."/>
            <person name="Lapidus A."/>
            <person name="Barry K."/>
            <person name="Detter J.C."/>
            <person name="Glavina T."/>
            <person name="Hammon N."/>
            <person name="Israni S."/>
            <person name="Pitluck S."/>
            <person name="Chain P."/>
            <person name="Malfatti S."/>
            <person name="Shin M."/>
            <person name="Vergez L."/>
            <person name="Schmutz J."/>
            <person name="Larimer F."/>
            <person name="Land M."/>
            <person name="Kyrpides N."/>
            <person name="Lykidis A."/>
            <person name="Richardson P."/>
        </authorList>
    </citation>
    <scope>NUCLEOTIDE SEQUENCE [LARGE SCALE GENOMIC DNA]</scope>
    <source>
        <strain>ATCC 17760 / DSM 23089 / LMG 22485 / NCIMB 9086 / R18194 / 383</strain>
    </source>
</reference>
<accession>Q39DV4</accession>
<comment type="function">
    <text evidence="1">Is required not only for elongation of protein synthesis but also for the initiation of all mRNA translation through initiator tRNA(fMet) aminoacylation.</text>
</comment>
<comment type="catalytic activity">
    <reaction evidence="1">
        <text>tRNA(Met) + L-methionine + ATP = L-methionyl-tRNA(Met) + AMP + diphosphate</text>
        <dbReference type="Rhea" id="RHEA:13481"/>
        <dbReference type="Rhea" id="RHEA-COMP:9667"/>
        <dbReference type="Rhea" id="RHEA-COMP:9698"/>
        <dbReference type="ChEBI" id="CHEBI:30616"/>
        <dbReference type="ChEBI" id="CHEBI:33019"/>
        <dbReference type="ChEBI" id="CHEBI:57844"/>
        <dbReference type="ChEBI" id="CHEBI:78442"/>
        <dbReference type="ChEBI" id="CHEBI:78530"/>
        <dbReference type="ChEBI" id="CHEBI:456215"/>
        <dbReference type="EC" id="6.1.1.10"/>
    </reaction>
</comment>
<comment type="cofactor">
    <cofactor evidence="1">
        <name>Zn(2+)</name>
        <dbReference type="ChEBI" id="CHEBI:29105"/>
    </cofactor>
    <text evidence="1">Binds 1 zinc ion per subunit.</text>
</comment>
<comment type="subunit">
    <text evidence="1">Homodimer.</text>
</comment>
<comment type="subcellular location">
    <subcellularLocation>
        <location evidence="1">Cytoplasm</location>
    </subcellularLocation>
</comment>
<comment type="similarity">
    <text evidence="1">Belongs to the class-I aminoacyl-tRNA synthetase family. MetG type 1 subfamily.</text>
</comment>
<dbReference type="EC" id="6.1.1.10" evidence="1"/>
<dbReference type="EMBL" id="CP000151">
    <property type="protein sequence ID" value="ABB09362.1"/>
    <property type="molecule type" value="Genomic_DNA"/>
</dbReference>
<dbReference type="RefSeq" id="WP_011352886.1">
    <property type="nucleotide sequence ID" value="NC_007510.1"/>
</dbReference>
<dbReference type="SMR" id="Q39DV4"/>
<dbReference type="GeneID" id="45095652"/>
<dbReference type="KEGG" id="bur:Bcep18194_A5768"/>
<dbReference type="PATRIC" id="fig|482957.22.peg.2750"/>
<dbReference type="HOGENOM" id="CLU_009710_7_0_4"/>
<dbReference type="Proteomes" id="UP000002705">
    <property type="component" value="Chromosome 1"/>
</dbReference>
<dbReference type="GO" id="GO:0005829">
    <property type="term" value="C:cytosol"/>
    <property type="evidence" value="ECO:0007669"/>
    <property type="project" value="TreeGrafter"/>
</dbReference>
<dbReference type="GO" id="GO:0005524">
    <property type="term" value="F:ATP binding"/>
    <property type="evidence" value="ECO:0007669"/>
    <property type="project" value="UniProtKB-UniRule"/>
</dbReference>
<dbReference type="GO" id="GO:0046872">
    <property type="term" value="F:metal ion binding"/>
    <property type="evidence" value="ECO:0007669"/>
    <property type="project" value="UniProtKB-KW"/>
</dbReference>
<dbReference type="GO" id="GO:0004825">
    <property type="term" value="F:methionine-tRNA ligase activity"/>
    <property type="evidence" value="ECO:0007669"/>
    <property type="project" value="UniProtKB-UniRule"/>
</dbReference>
<dbReference type="GO" id="GO:0000049">
    <property type="term" value="F:tRNA binding"/>
    <property type="evidence" value="ECO:0007669"/>
    <property type="project" value="UniProtKB-KW"/>
</dbReference>
<dbReference type="GO" id="GO:0006431">
    <property type="term" value="P:methionyl-tRNA aminoacylation"/>
    <property type="evidence" value="ECO:0007669"/>
    <property type="project" value="UniProtKB-UniRule"/>
</dbReference>
<dbReference type="CDD" id="cd07957">
    <property type="entry name" value="Anticodon_Ia_Met"/>
    <property type="match status" value="1"/>
</dbReference>
<dbReference type="CDD" id="cd00814">
    <property type="entry name" value="MetRS_core"/>
    <property type="match status" value="1"/>
</dbReference>
<dbReference type="CDD" id="cd02800">
    <property type="entry name" value="tRNA_bind_EcMetRS_like"/>
    <property type="match status" value="1"/>
</dbReference>
<dbReference type="FunFam" id="2.20.28.20:FF:000001">
    <property type="entry name" value="Methionine--tRNA ligase"/>
    <property type="match status" value="1"/>
</dbReference>
<dbReference type="FunFam" id="2.40.50.140:FF:000042">
    <property type="entry name" value="Methionine--tRNA ligase"/>
    <property type="match status" value="1"/>
</dbReference>
<dbReference type="Gene3D" id="3.40.50.620">
    <property type="entry name" value="HUPs"/>
    <property type="match status" value="1"/>
</dbReference>
<dbReference type="Gene3D" id="1.10.730.10">
    <property type="entry name" value="Isoleucyl-tRNA Synthetase, Domain 1"/>
    <property type="match status" value="1"/>
</dbReference>
<dbReference type="Gene3D" id="2.20.28.20">
    <property type="entry name" value="Methionyl-tRNA synthetase, Zn-domain"/>
    <property type="match status" value="1"/>
</dbReference>
<dbReference type="Gene3D" id="2.40.50.140">
    <property type="entry name" value="Nucleic acid-binding proteins"/>
    <property type="match status" value="1"/>
</dbReference>
<dbReference type="HAMAP" id="MF_00098">
    <property type="entry name" value="Met_tRNA_synth_type1"/>
    <property type="match status" value="1"/>
</dbReference>
<dbReference type="InterPro" id="IPR001412">
    <property type="entry name" value="aa-tRNA-synth_I_CS"/>
</dbReference>
<dbReference type="InterPro" id="IPR041872">
    <property type="entry name" value="Anticodon_Met"/>
</dbReference>
<dbReference type="InterPro" id="IPR013155">
    <property type="entry name" value="M/V/L/I-tRNA-synth_anticd-bd"/>
</dbReference>
<dbReference type="InterPro" id="IPR004495">
    <property type="entry name" value="Met-tRNA-synth_bsu_C"/>
</dbReference>
<dbReference type="InterPro" id="IPR023458">
    <property type="entry name" value="Met-tRNA_ligase_1"/>
</dbReference>
<dbReference type="InterPro" id="IPR014758">
    <property type="entry name" value="Met-tRNA_synth"/>
</dbReference>
<dbReference type="InterPro" id="IPR015413">
    <property type="entry name" value="Methionyl/Leucyl_tRNA_Synth"/>
</dbReference>
<dbReference type="InterPro" id="IPR033911">
    <property type="entry name" value="MetRS_core"/>
</dbReference>
<dbReference type="InterPro" id="IPR029038">
    <property type="entry name" value="MetRS_Zn"/>
</dbReference>
<dbReference type="InterPro" id="IPR012340">
    <property type="entry name" value="NA-bd_OB-fold"/>
</dbReference>
<dbReference type="InterPro" id="IPR014729">
    <property type="entry name" value="Rossmann-like_a/b/a_fold"/>
</dbReference>
<dbReference type="InterPro" id="IPR002547">
    <property type="entry name" value="tRNA-bd_dom"/>
</dbReference>
<dbReference type="InterPro" id="IPR009080">
    <property type="entry name" value="tRNAsynth_Ia_anticodon-bd"/>
</dbReference>
<dbReference type="NCBIfam" id="TIGR00398">
    <property type="entry name" value="metG"/>
    <property type="match status" value="1"/>
</dbReference>
<dbReference type="NCBIfam" id="TIGR00399">
    <property type="entry name" value="metG_C_term"/>
    <property type="match status" value="1"/>
</dbReference>
<dbReference type="NCBIfam" id="NF001100">
    <property type="entry name" value="PRK00133.1"/>
    <property type="match status" value="1"/>
</dbReference>
<dbReference type="PANTHER" id="PTHR45765">
    <property type="entry name" value="METHIONINE--TRNA LIGASE"/>
    <property type="match status" value="1"/>
</dbReference>
<dbReference type="PANTHER" id="PTHR45765:SF1">
    <property type="entry name" value="METHIONINE--TRNA LIGASE, CYTOPLASMIC"/>
    <property type="match status" value="1"/>
</dbReference>
<dbReference type="Pfam" id="PF08264">
    <property type="entry name" value="Anticodon_1"/>
    <property type="match status" value="1"/>
</dbReference>
<dbReference type="Pfam" id="PF09334">
    <property type="entry name" value="tRNA-synt_1g"/>
    <property type="match status" value="1"/>
</dbReference>
<dbReference type="Pfam" id="PF01588">
    <property type="entry name" value="tRNA_bind"/>
    <property type="match status" value="1"/>
</dbReference>
<dbReference type="PRINTS" id="PR01041">
    <property type="entry name" value="TRNASYNTHMET"/>
</dbReference>
<dbReference type="SUPFAM" id="SSF47323">
    <property type="entry name" value="Anticodon-binding domain of a subclass of class I aminoacyl-tRNA synthetases"/>
    <property type="match status" value="1"/>
</dbReference>
<dbReference type="SUPFAM" id="SSF57770">
    <property type="entry name" value="Methionyl-tRNA synthetase (MetRS), Zn-domain"/>
    <property type="match status" value="1"/>
</dbReference>
<dbReference type="SUPFAM" id="SSF50249">
    <property type="entry name" value="Nucleic acid-binding proteins"/>
    <property type="match status" value="1"/>
</dbReference>
<dbReference type="SUPFAM" id="SSF52374">
    <property type="entry name" value="Nucleotidylyl transferase"/>
    <property type="match status" value="1"/>
</dbReference>
<dbReference type="PROSITE" id="PS00178">
    <property type="entry name" value="AA_TRNA_LIGASE_I"/>
    <property type="match status" value="1"/>
</dbReference>
<dbReference type="PROSITE" id="PS50886">
    <property type="entry name" value="TRBD"/>
    <property type="match status" value="1"/>
</dbReference>
<organism>
    <name type="scientific">Burkholderia lata (strain ATCC 17760 / DSM 23089 / LMG 22485 / NCIMB 9086 / R18194 / 383)</name>
    <dbReference type="NCBI Taxonomy" id="482957"/>
    <lineage>
        <taxon>Bacteria</taxon>
        <taxon>Pseudomonadati</taxon>
        <taxon>Pseudomonadota</taxon>
        <taxon>Betaproteobacteria</taxon>
        <taxon>Burkholderiales</taxon>
        <taxon>Burkholderiaceae</taxon>
        <taxon>Burkholderia</taxon>
        <taxon>Burkholderia cepacia complex</taxon>
    </lineage>
</organism>
<keyword id="KW-0030">Aminoacyl-tRNA synthetase</keyword>
<keyword id="KW-0067">ATP-binding</keyword>
<keyword id="KW-0963">Cytoplasm</keyword>
<keyword id="KW-0436">Ligase</keyword>
<keyword id="KW-0479">Metal-binding</keyword>
<keyword id="KW-0547">Nucleotide-binding</keyword>
<keyword id="KW-0648">Protein biosynthesis</keyword>
<keyword id="KW-0694">RNA-binding</keyword>
<keyword id="KW-0820">tRNA-binding</keyword>
<keyword id="KW-0862">Zinc</keyword>
<sequence>MSASDLTSVQAAAPQGDRQILVTSALPYANGQIHIGHLVEYIQTDIWVRTLRMHGHEVYYIGADDTHGTPIMLRAEKEGLTPKQLIDRVWTEHKRDFDSFGVSFDNFYSTDSDENRVLSEKIYVALQDAGFIAEREIEQAYDPVKEMFLPDRFIKGECPKCHAKDQYGDNCEVCGSTYLPTELLNPYSVVSGATPVRKTSKHYFFRLSDPRCETFLREWVSGLAQPEATNKMREWLGDAGEAKLADWDISRDAPYFGFEIPGAPGKYFYVWLDAPVGYYASFKNLCDRNGVDFDAWVRPGSTTEQYHFIGKDILYFHTLFWPAMLEFSGHRTPTNVFAHGFLTVDGAKMSKSRGTFITAQSYIDTGLNPEWLRYYFAAKLNATMEDIDLNLDDFQARVNSDLVGKYVNIASRAAGFLIKRFDGRVQDSAMNHPLVAKLREAIPQIAAHYEAREYGRALRHTMELADEVNAYVDGAKPWDLAKDPANAVALHETCSVSLESFRLLSLALKPVMPRVAEAVESFFGIAPLAWSDAAKPLSSEQPIKAYQHLMTRVDPKQIEALLAANRDSLQAEATGAAVATANAAKDAKNSAKANANAKQAVVNGADDAPISIDDFAKIDLRIAKIVACQAVEGSDKLLQLTLDVGEEKTRNVFSGIKSAYQPEQLVGKLTVMVANLAPRKMKFGLSEGMVLAASATDEKAEPGLYILEPHSGAKPGMRVK</sequence>
<gene>
    <name evidence="1" type="primary">metG</name>
    <name type="ordered locus">Bcep18194_A5768</name>
</gene>
<protein>
    <recommendedName>
        <fullName evidence="1">Methionine--tRNA ligase</fullName>
        <ecNumber evidence="1">6.1.1.10</ecNumber>
    </recommendedName>
    <alternativeName>
        <fullName evidence="1">Methionyl-tRNA synthetase</fullName>
        <shortName evidence="1">MetRS</shortName>
    </alternativeName>
</protein>
<feature type="chain" id="PRO_0000331796" description="Methionine--tRNA ligase">
    <location>
        <begin position="1"/>
        <end position="720"/>
    </location>
</feature>
<feature type="domain" description="tRNA-binding" evidence="1">
    <location>
        <begin position="614"/>
        <end position="720"/>
    </location>
</feature>
<feature type="short sequence motif" description="'HIGH' region">
    <location>
        <begin position="27"/>
        <end position="37"/>
    </location>
</feature>
<feature type="short sequence motif" description="'KMSKS' region">
    <location>
        <begin position="348"/>
        <end position="352"/>
    </location>
</feature>
<feature type="binding site" evidence="1">
    <location>
        <position position="158"/>
    </location>
    <ligand>
        <name>Zn(2+)</name>
        <dbReference type="ChEBI" id="CHEBI:29105"/>
    </ligand>
</feature>
<feature type="binding site" evidence="1">
    <location>
        <position position="161"/>
    </location>
    <ligand>
        <name>Zn(2+)</name>
        <dbReference type="ChEBI" id="CHEBI:29105"/>
    </ligand>
</feature>
<feature type="binding site" evidence="1">
    <location>
        <position position="171"/>
    </location>
    <ligand>
        <name>Zn(2+)</name>
        <dbReference type="ChEBI" id="CHEBI:29105"/>
    </ligand>
</feature>
<feature type="binding site" evidence="1">
    <location>
        <position position="174"/>
    </location>
    <ligand>
        <name>Zn(2+)</name>
        <dbReference type="ChEBI" id="CHEBI:29105"/>
    </ligand>
</feature>
<feature type="binding site" evidence="1">
    <location>
        <position position="351"/>
    </location>
    <ligand>
        <name>ATP</name>
        <dbReference type="ChEBI" id="CHEBI:30616"/>
    </ligand>
</feature>
<proteinExistence type="inferred from homology"/>